<sequence>MASLGVNIDHIANVRQARQTVEPDPVPMALLAELGGADGITVHLREDRRHIQDRDLELLRATVRSRLNLEMAATPEMVGIALKIQPDMVTLVPERRQEVTTEGGLDVAAQQGSLKGMVDQLQVAGIPVSLFVDPVSQQLEAACKSGARWVELHTGAYAEACWANQSFELARLNEATARARSLGLRVNAGHGLTYQNVEAVAAIEGIEELNIGHTIVARSIAVGLQEAVREMKRLVQNPRREPLFG</sequence>
<accession>A2C897</accession>
<comment type="function">
    <text evidence="1">Catalyzes the complicated ring closure reaction between the two acyclic compounds 1-deoxy-D-xylulose-5-phosphate (DXP) and 3-amino-2-oxopropyl phosphate (1-amino-acetone-3-phosphate or AAP) to form pyridoxine 5'-phosphate (PNP) and inorganic phosphate.</text>
</comment>
<comment type="catalytic activity">
    <reaction evidence="1">
        <text>3-amino-2-oxopropyl phosphate + 1-deoxy-D-xylulose 5-phosphate = pyridoxine 5'-phosphate + phosphate + 2 H2O + H(+)</text>
        <dbReference type="Rhea" id="RHEA:15265"/>
        <dbReference type="ChEBI" id="CHEBI:15377"/>
        <dbReference type="ChEBI" id="CHEBI:15378"/>
        <dbReference type="ChEBI" id="CHEBI:43474"/>
        <dbReference type="ChEBI" id="CHEBI:57279"/>
        <dbReference type="ChEBI" id="CHEBI:57792"/>
        <dbReference type="ChEBI" id="CHEBI:58589"/>
        <dbReference type="EC" id="2.6.99.2"/>
    </reaction>
</comment>
<comment type="pathway">
    <text evidence="1">Cofactor biosynthesis; pyridoxine 5'-phosphate biosynthesis; pyridoxine 5'-phosphate from D-erythrose 4-phosphate: step 5/5.</text>
</comment>
<comment type="subunit">
    <text evidence="1">Homooctamer; tetramer of dimers.</text>
</comment>
<comment type="subcellular location">
    <subcellularLocation>
        <location evidence="1">Cytoplasm</location>
    </subcellularLocation>
</comment>
<comment type="similarity">
    <text evidence="1">Belongs to the PNP synthase family.</text>
</comment>
<name>PDXJ_PROM3</name>
<dbReference type="EC" id="2.6.99.2" evidence="1"/>
<dbReference type="EMBL" id="CP000554">
    <property type="protein sequence ID" value="ABM77707.1"/>
    <property type="molecule type" value="Genomic_DNA"/>
</dbReference>
<dbReference type="RefSeq" id="WP_011825613.1">
    <property type="nucleotide sequence ID" value="NC_008820.1"/>
</dbReference>
<dbReference type="SMR" id="A2C897"/>
<dbReference type="STRING" id="59922.P9303_09561"/>
<dbReference type="KEGG" id="pmf:P9303_09561"/>
<dbReference type="HOGENOM" id="CLU_074563_0_0_3"/>
<dbReference type="BioCyc" id="PMAR59922:G1G80-864-MONOMER"/>
<dbReference type="UniPathway" id="UPA00244">
    <property type="reaction ID" value="UER00313"/>
</dbReference>
<dbReference type="Proteomes" id="UP000002274">
    <property type="component" value="Chromosome"/>
</dbReference>
<dbReference type="GO" id="GO:0005829">
    <property type="term" value="C:cytosol"/>
    <property type="evidence" value="ECO:0007669"/>
    <property type="project" value="TreeGrafter"/>
</dbReference>
<dbReference type="GO" id="GO:0033856">
    <property type="term" value="F:pyridoxine 5'-phosphate synthase activity"/>
    <property type="evidence" value="ECO:0007669"/>
    <property type="project" value="UniProtKB-EC"/>
</dbReference>
<dbReference type="GO" id="GO:0008615">
    <property type="term" value="P:pyridoxine biosynthetic process"/>
    <property type="evidence" value="ECO:0007669"/>
    <property type="project" value="UniProtKB-UniRule"/>
</dbReference>
<dbReference type="CDD" id="cd00003">
    <property type="entry name" value="PNPsynthase"/>
    <property type="match status" value="1"/>
</dbReference>
<dbReference type="Gene3D" id="3.20.20.70">
    <property type="entry name" value="Aldolase class I"/>
    <property type="match status" value="1"/>
</dbReference>
<dbReference type="HAMAP" id="MF_00279">
    <property type="entry name" value="PdxJ"/>
    <property type="match status" value="1"/>
</dbReference>
<dbReference type="InterPro" id="IPR013785">
    <property type="entry name" value="Aldolase_TIM"/>
</dbReference>
<dbReference type="InterPro" id="IPR004569">
    <property type="entry name" value="PyrdxlP_synth_PdxJ"/>
</dbReference>
<dbReference type="InterPro" id="IPR036130">
    <property type="entry name" value="Pyridoxine-5'_phos_synth"/>
</dbReference>
<dbReference type="NCBIfam" id="TIGR00559">
    <property type="entry name" value="pdxJ"/>
    <property type="match status" value="1"/>
</dbReference>
<dbReference type="NCBIfam" id="NF003625">
    <property type="entry name" value="PRK05265.1-3"/>
    <property type="match status" value="1"/>
</dbReference>
<dbReference type="NCBIfam" id="NF003627">
    <property type="entry name" value="PRK05265.1-5"/>
    <property type="match status" value="1"/>
</dbReference>
<dbReference type="PANTHER" id="PTHR30456">
    <property type="entry name" value="PYRIDOXINE 5'-PHOSPHATE SYNTHASE"/>
    <property type="match status" value="1"/>
</dbReference>
<dbReference type="PANTHER" id="PTHR30456:SF0">
    <property type="entry name" value="PYRIDOXINE 5'-PHOSPHATE SYNTHASE"/>
    <property type="match status" value="1"/>
</dbReference>
<dbReference type="Pfam" id="PF03740">
    <property type="entry name" value="PdxJ"/>
    <property type="match status" value="1"/>
</dbReference>
<dbReference type="SUPFAM" id="SSF63892">
    <property type="entry name" value="Pyridoxine 5'-phosphate synthase"/>
    <property type="match status" value="1"/>
</dbReference>
<reference key="1">
    <citation type="journal article" date="2007" name="PLoS Genet.">
        <title>Patterns and implications of gene gain and loss in the evolution of Prochlorococcus.</title>
        <authorList>
            <person name="Kettler G.C."/>
            <person name="Martiny A.C."/>
            <person name="Huang K."/>
            <person name="Zucker J."/>
            <person name="Coleman M.L."/>
            <person name="Rodrigue S."/>
            <person name="Chen F."/>
            <person name="Lapidus A."/>
            <person name="Ferriera S."/>
            <person name="Johnson J."/>
            <person name="Steglich C."/>
            <person name="Church G.M."/>
            <person name="Richardson P."/>
            <person name="Chisholm S.W."/>
        </authorList>
    </citation>
    <scope>NUCLEOTIDE SEQUENCE [LARGE SCALE GENOMIC DNA]</scope>
    <source>
        <strain>MIT 9303</strain>
    </source>
</reference>
<evidence type="ECO:0000255" key="1">
    <source>
        <dbReference type="HAMAP-Rule" id="MF_00279"/>
    </source>
</evidence>
<gene>
    <name evidence="1" type="primary">pdxJ</name>
    <name type="ordered locus">P9303_09561</name>
</gene>
<keyword id="KW-0963">Cytoplasm</keyword>
<keyword id="KW-0664">Pyridoxine biosynthesis</keyword>
<keyword id="KW-0808">Transferase</keyword>
<proteinExistence type="inferred from homology"/>
<organism>
    <name type="scientific">Prochlorococcus marinus (strain MIT 9303)</name>
    <dbReference type="NCBI Taxonomy" id="59922"/>
    <lineage>
        <taxon>Bacteria</taxon>
        <taxon>Bacillati</taxon>
        <taxon>Cyanobacteriota</taxon>
        <taxon>Cyanophyceae</taxon>
        <taxon>Synechococcales</taxon>
        <taxon>Prochlorococcaceae</taxon>
        <taxon>Prochlorococcus</taxon>
    </lineage>
</organism>
<protein>
    <recommendedName>
        <fullName evidence="1">Pyridoxine 5'-phosphate synthase</fullName>
        <shortName evidence="1">PNP synthase</shortName>
        <ecNumber evidence="1">2.6.99.2</ecNumber>
    </recommendedName>
</protein>
<feature type="chain" id="PRO_1000022387" description="Pyridoxine 5'-phosphate synthase">
    <location>
        <begin position="1"/>
        <end position="245"/>
    </location>
</feature>
<feature type="active site" description="Proton acceptor" evidence="1">
    <location>
        <position position="43"/>
    </location>
</feature>
<feature type="active site" description="Proton acceptor" evidence="1">
    <location>
        <position position="70"/>
    </location>
</feature>
<feature type="active site" description="Proton donor" evidence="1">
    <location>
        <position position="190"/>
    </location>
</feature>
<feature type="binding site" evidence="1">
    <location>
        <position position="7"/>
    </location>
    <ligand>
        <name>3-amino-2-oxopropyl phosphate</name>
        <dbReference type="ChEBI" id="CHEBI:57279"/>
    </ligand>
</feature>
<feature type="binding site" evidence="1">
    <location>
        <begin position="9"/>
        <end position="10"/>
    </location>
    <ligand>
        <name>1-deoxy-D-xylulose 5-phosphate</name>
        <dbReference type="ChEBI" id="CHEBI:57792"/>
    </ligand>
</feature>
<feature type="binding site" evidence="1">
    <location>
        <position position="18"/>
    </location>
    <ligand>
        <name>3-amino-2-oxopropyl phosphate</name>
        <dbReference type="ChEBI" id="CHEBI:57279"/>
    </ligand>
</feature>
<feature type="binding site" evidence="1">
    <location>
        <position position="45"/>
    </location>
    <ligand>
        <name>1-deoxy-D-xylulose 5-phosphate</name>
        <dbReference type="ChEBI" id="CHEBI:57792"/>
    </ligand>
</feature>
<feature type="binding site" evidence="1">
    <location>
        <position position="50"/>
    </location>
    <ligand>
        <name>1-deoxy-D-xylulose 5-phosphate</name>
        <dbReference type="ChEBI" id="CHEBI:57792"/>
    </ligand>
</feature>
<feature type="binding site" evidence="1">
    <location>
        <position position="100"/>
    </location>
    <ligand>
        <name>1-deoxy-D-xylulose 5-phosphate</name>
        <dbReference type="ChEBI" id="CHEBI:57792"/>
    </ligand>
</feature>
<feature type="binding site" evidence="1">
    <location>
        <position position="191"/>
    </location>
    <ligand>
        <name>3-amino-2-oxopropyl phosphate</name>
        <dbReference type="ChEBI" id="CHEBI:57279"/>
    </ligand>
</feature>
<feature type="binding site" evidence="1">
    <location>
        <begin position="212"/>
        <end position="213"/>
    </location>
    <ligand>
        <name>3-amino-2-oxopropyl phosphate</name>
        <dbReference type="ChEBI" id="CHEBI:57279"/>
    </ligand>
</feature>
<feature type="site" description="Transition state stabilizer" evidence="1">
    <location>
        <position position="151"/>
    </location>
</feature>